<accession>Q8XV24</accession>
<gene>
    <name evidence="1" type="primary">rplE</name>
    <name type="ordered locus">RSc3007</name>
    <name type="ORF">RS01082</name>
</gene>
<dbReference type="EMBL" id="AL646052">
    <property type="protein sequence ID" value="CAD16716.1"/>
    <property type="molecule type" value="Genomic_DNA"/>
</dbReference>
<dbReference type="RefSeq" id="WP_003264131.1">
    <property type="nucleotide sequence ID" value="NC_003295.1"/>
</dbReference>
<dbReference type="SMR" id="Q8XV24"/>
<dbReference type="STRING" id="267608.RSc3007"/>
<dbReference type="EnsemblBacteria" id="CAD16716">
    <property type="protein sequence ID" value="CAD16716"/>
    <property type="gene ID" value="RSc3007"/>
</dbReference>
<dbReference type="GeneID" id="93851191"/>
<dbReference type="KEGG" id="rso:RSc3007"/>
<dbReference type="eggNOG" id="COG0094">
    <property type="taxonomic scope" value="Bacteria"/>
</dbReference>
<dbReference type="HOGENOM" id="CLU_061015_2_1_4"/>
<dbReference type="Proteomes" id="UP000001436">
    <property type="component" value="Chromosome"/>
</dbReference>
<dbReference type="GO" id="GO:1990904">
    <property type="term" value="C:ribonucleoprotein complex"/>
    <property type="evidence" value="ECO:0007669"/>
    <property type="project" value="UniProtKB-KW"/>
</dbReference>
<dbReference type="GO" id="GO:0005840">
    <property type="term" value="C:ribosome"/>
    <property type="evidence" value="ECO:0007669"/>
    <property type="project" value="UniProtKB-KW"/>
</dbReference>
<dbReference type="GO" id="GO:0019843">
    <property type="term" value="F:rRNA binding"/>
    <property type="evidence" value="ECO:0007669"/>
    <property type="project" value="UniProtKB-UniRule"/>
</dbReference>
<dbReference type="GO" id="GO:0003735">
    <property type="term" value="F:structural constituent of ribosome"/>
    <property type="evidence" value="ECO:0007669"/>
    <property type="project" value="InterPro"/>
</dbReference>
<dbReference type="GO" id="GO:0000049">
    <property type="term" value="F:tRNA binding"/>
    <property type="evidence" value="ECO:0007669"/>
    <property type="project" value="UniProtKB-UniRule"/>
</dbReference>
<dbReference type="GO" id="GO:0006412">
    <property type="term" value="P:translation"/>
    <property type="evidence" value="ECO:0007669"/>
    <property type="project" value="UniProtKB-UniRule"/>
</dbReference>
<dbReference type="FunFam" id="3.30.1440.10:FF:000001">
    <property type="entry name" value="50S ribosomal protein L5"/>
    <property type="match status" value="1"/>
</dbReference>
<dbReference type="Gene3D" id="3.30.1440.10">
    <property type="match status" value="1"/>
</dbReference>
<dbReference type="HAMAP" id="MF_01333_B">
    <property type="entry name" value="Ribosomal_uL5_B"/>
    <property type="match status" value="1"/>
</dbReference>
<dbReference type="InterPro" id="IPR002132">
    <property type="entry name" value="Ribosomal_uL5"/>
</dbReference>
<dbReference type="InterPro" id="IPR020930">
    <property type="entry name" value="Ribosomal_uL5_bac-type"/>
</dbReference>
<dbReference type="InterPro" id="IPR031309">
    <property type="entry name" value="Ribosomal_uL5_C"/>
</dbReference>
<dbReference type="InterPro" id="IPR020929">
    <property type="entry name" value="Ribosomal_uL5_CS"/>
</dbReference>
<dbReference type="InterPro" id="IPR022803">
    <property type="entry name" value="Ribosomal_uL5_dom_sf"/>
</dbReference>
<dbReference type="InterPro" id="IPR031310">
    <property type="entry name" value="Ribosomal_uL5_N"/>
</dbReference>
<dbReference type="NCBIfam" id="NF000585">
    <property type="entry name" value="PRK00010.1"/>
    <property type="match status" value="1"/>
</dbReference>
<dbReference type="PANTHER" id="PTHR11994">
    <property type="entry name" value="60S RIBOSOMAL PROTEIN L11-RELATED"/>
    <property type="match status" value="1"/>
</dbReference>
<dbReference type="Pfam" id="PF00281">
    <property type="entry name" value="Ribosomal_L5"/>
    <property type="match status" value="1"/>
</dbReference>
<dbReference type="Pfam" id="PF00673">
    <property type="entry name" value="Ribosomal_L5_C"/>
    <property type="match status" value="1"/>
</dbReference>
<dbReference type="PIRSF" id="PIRSF002161">
    <property type="entry name" value="Ribosomal_L5"/>
    <property type="match status" value="1"/>
</dbReference>
<dbReference type="SUPFAM" id="SSF55282">
    <property type="entry name" value="RL5-like"/>
    <property type="match status" value="1"/>
</dbReference>
<dbReference type="PROSITE" id="PS00358">
    <property type="entry name" value="RIBOSOMAL_L5"/>
    <property type="match status" value="1"/>
</dbReference>
<keyword id="KW-1185">Reference proteome</keyword>
<keyword id="KW-0687">Ribonucleoprotein</keyword>
<keyword id="KW-0689">Ribosomal protein</keyword>
<keyword id="KW-0694">RNA-binding</keyword>
<keyword id="KW-0699">rRNA-binding</keyword>
<keyword id="KW-0820">tRNA-binding</keyword>
<protein>
    <recommendedName>
        <fullName evidence="1">Large ribosomal subunit protein uL5</fullName>
    </recommendedName>
    <alternativeName>
        <fullName evidence="2">50S ribosomal protein L5</fullName>
    </alternativeName>
</protein>
<name>RL5_RALN1</name>
<organism>
    <name type="scientific">Ralstonia nicotianae (strain ATCC BAA-1114 / GMI1000)</name>
    <name type="common">Ralstonia solanacearum</name>
    <dbReference type="NCBI Taxonomy" id="267608"/>
    <lineage>
        <taxon>Bacteria</taxon>
        <taxon>Pseudomonadati</taxon>
        <taxon>Pseudomonadota</taxon>
        <taxon>Betaproteobacteria</taxon>
        <taxon>Burkholderiales</taxon>
        <taxon>Burkholderiaceae</taxon>
        <taxon>Ralstonia</taxon>
        <taxon>Ralstonia solanacearum species complex</taxon>
    </lineage>
</organism>
<feature type="chain" id="PRO_0000124973" description="Large ribosomal subunit protein uL5">
    <location>
        <begin position="1"/>
        <end position="180"/>
    </location>
</feature>
<evidence type="ECO:0000255" key="1">
    <source>
        <dbReference type="HAMAP-Rule" id="MF_01333"/>
    </source>
</evidence>
<evidence type="ECO:0000305" key="2"/>
<sequence length="180" mass="20309">MTARLQEFYKEKVVAELIKQFGYKSVMEVPRITKITLNMGLGEAVNDKKVIEHATGDLTKIAGQKPVVTKARKAIAGFKIRQGYPIGTMVTLRGQRMYEFLDRFITVSLPRVRDFRGVSGRAFDGRGNYNIGVKEQIIFPEIEYDKIDALRGLNISITTTAKSDEEAKALLAAFKFPFRN</sequence>
<reference key="1">
    <citation type="journal article" date="2002" name="Nature">
        <title>Genome sequence of the plant pathogen Ralstonia solanacearum.</title>
        <authorList>
            <person name="Salanoubat M."/>
            <person name="Genin S."/>
            <person name="Artiguenave F."/>
            <person name="Gouzy J."/>
            <person name="Mangenot S."/>
            <person name="Arlat M."/>
            <person name="Billault A."/>
            <person name="Brottier P."/>
            <person name="Camus J.-C."/>
            <person name="Cattolico L."/>
            <person name="Chandler M."/>
            <person name="Choisne N."/>
            <person name="Claudel-Renard C."/>
            <person name="Cunnac S."/>
            <person name="Demange N."/>
            <person name="Gaspin C."/>
            <person name="Lavie M."/>
            <person name="Moisan A."/>
            <person name="Robert C."/>
            <person name="Saurin W."/>
            <person name="Schiex T."/>
            <person name="Siguier P."/>
            <person name="Thebault P."/>
            <person name="Whalen M."/>
            <person name="Wincker P."/>
            <person name="Levy M."/>
            <person name="Weissenbach J."/>
            <person name="Boucher C.A."/>
        </authorList>
    </citation>
    <scope>NUCLEOTIDE SEQUENCE [LARGE SCALE GENOMIC DNA]</scope>
    <source>
        <strain>ATCC BAA-1114 / GMI1000</strain>
    </source>
</reference>
<comment type="function">
    <text evidence="1">This is one of the proteins that bind and probably mediate the attachment of the 5S RNA into the large ribosomal subunit, where it forms part of the central protuberance. In the 70S ribosome it contacts protein S13 of the 30S subunit (bridge B1b), connecting the 2 subunits; this bridge is implicated in subunit movement. Contacts the P site tRNA; the 5S rRNA and some of its associated proteins might help stabilize positioning of ribosome-bound tRNAs.</text>
</comment>
<comment type="subunit">
    <text evidence="1">Part of the 50S ribosomal subunit; part of the 5S rRNA/L5/L18/L25 subcomplex. Contacts the 5S rRNA and the P site tRNA. Forms a bridge to the 30S subunit in the 70S ribosome.</text>
</comment>
<comment type="similarity">
    <text evidence="1">Belongs to the universal ribosomal protein uL5 family.</text>
</comment>
<proteinExistence type="inferred from homology"/>